<comment type="function">
    <text evidence="1">Catalyzes the reduction of the glycolytic intermediate dihydroxyacetone phosphate (DHAP) to sn-glycerol 3-phosphate (G3P), the key precursor for phospholipid synthesis.</text>
</comment>
<comment type="catalytic activity">
    <reaction evidence="1">
        <text>sn-glycerol 3-phosphate + NAD(+) = dihydroxyacetone phosphate + NADH + H(+)</text>
        <dbReference type="Rhea" id="RHEA:11092"/>
        <dbReference type="ChEBI" id="CHEBI:15378"/>
        <dbReference type="ChEBI" id="CHEBI:57540"/>
        <dbReference type="ChEBI" id="CHEBI:57597"/>
        <dbReference type="ChEBI" id="CHEBI:57642"/>
        <dbReference type="ChEBI" id="CHEBI:57945"/>
        <dbReference type="EC" id="1.1.1.94"/>
    </reaction>
    <physiologicalReaction direction="right-to-left" evidence="1">
        <dbReference type="Rhea" id="RHEA:11094"/>
    </physiologicalReaction>
</comment>
<comment type="catalytic activity">
    <reaction evidence="1">
        <text>sn-glycerol 3-phosphate + NADP(+) = dihydroxyacetone phosphate + NADPH + H(+)</text>
        <dbReference type="Rhea" id="RHEA:11096"/>
        <dbReference type="ChEBI" id="CHEBI:15378"/>
        <dbReference type="ChEBI" id="CHEBI:57597"/>
        <dbReference type="ChEBI" id="CHEBI:57642"/>
        <dbReference type="ChEBI" id="CHEBI:57783"/>
        <dbReference type="ChEBI" id="CHEBI:58349"/>
        <dbReference type="EC" id="1.1.1.94"/>
    </reaction>
    <physiologicalReaction direction="right-to-left" evidence="1">
        <dbReference type="Rhea" id="RHEA:11098"/>
    </physiologicalReaction>
</comment>
<comment type="pathway">
    <text evidence="1">Membrane lipid metabolism; glycerophospholipid metabolism.</text>
</comment>
<comment type="subcellular location">
    <subcellularLocation>
        <location evidence="1">Cytoplasm</location>
    </subcellularLocation>
</comment>
<comment type="similarity">
    <text evidence="1">Belongs to the NAD-dependent glycerol-3-phosphate dehydrogenase family.</text>
</comment>
<sequence length="332" mass="36083">MEPFKHPIAILGAGSWGTALALVLARKGQKVRLWSYESDHVDEMQAEGVNNRYLPNYPFPETLKAYCDLKASLEGVTDILIVVPSFAFHEVITRMKPLIDAKTRIAWGTKGLAKGSRLLHEVVATELGQVPMAVISGPSLATEVAANLPTAVSLASNNSQFSKDLIERLHGQRFRVYKNDDMIGVELCGSVKNILAIATGISDGLKLGSNARAALITRGLTEMGRLVSVFGGKQETLTGLAGLGDLVLTCTDNQSRNRRFGLALGEGVDKKEAQQSIGQAIEGLYNTDQVHALAQKHAIEMPLTFQVHRILHEDLDPQQAVQELLERSPKAE</sequence>
<feature type="chain" id="PRO_1000080305" description="Glycerol-3-phosphate dehydrogenase [NAD(P)+]">
    <location>
        <begin position="1"/>
        <end position="332"/>
    </location>
</feature>
<feature type="active site" description="Proton acceptor" evidence="1">
    <location>
        <position position="192"/>
    </location>
</feature>
<feature type="binding site" evidence="1">
    <location>
        <position position="15"/>
    </location>
    <ligand>
        <name>NADPH</name>
        <dbReference type="ChEBI" id="CHEBI:57783"/>
    </ligand>
</feature>
<feature type="binding site" evidence="1">
    <location>
        <position position="16"/>
    </location>
    <ligand>
        <name>NADPH</name>
        <dbReference type="ChEBI" id="CHEBI:57783"/>
    </ligand>
</feature>
<feature type="binding site" evidence="1">
    <location>
        <position position="110"/>
    </location>
    <ligand>
        <name>NADPH</name>
        <dbReference type="ChEBI" id="CHEBI:57783"/>
    </ligand>
</feature>
<feature type="binding site" evidence="1">
    <location>
        <position position="110"/>
    </location>
    <ligand>
        <name>sn-glycerol 3-phosphate</name>
        <dbReference type="ChEBI" id="CHEBI:57597"/>
    </ligand>
</feature>
<feature type="binding site" evidence="1">
    <location>
        <position position="137"/>
    </location>
    <ligand>
        <name>sn-glycerol 3-phosphate</name>
        <dbReference type="ChEBI" id="CHEBI:57597"/>
    </ligand>
</feature>
<feature type="binding site" evidence="1">
    <location>
        <position position="139"/>
    </location>
    <ligand>
        <name>sn-glycerol 3-phosphate</name>
        <dbReference type="ChEBI" id="CHEBI:57597"/>
    </ligand>
</feature>
<feature type="binding site" evidence="1">
    <location>
        <position position="141"/>
    </location>
    <ligand>
        <name>NADPH</name>
        <dbReference type="ChEBI" id="CHEBI:57783"/>
    </ligand>
</feature>
<feature type="binding site" evidence="1">
    <location>
        <position position="192"/>
    </location>
    <ligand>
        <name>sn-glycerol 3-phosphate</name>
        <dbReference type="ChEBI" id="CHEBI:57597"/>
    </ligand>
</feature>
<feature type="binding site" evidence="1">
    <location>
        <position position="245"/>
    </location>
    <ligand>
        <name>sn-glycerol 3-phosphate</name>
        <dbReference type="ChEBI" id="CHEBI:57597"/>
    </ligand>
</feature>
<feature type="binding site" evidence="1">
    <location>
        <position position="255"/>
    </location>
    <ligand>
        <name>sn-glycerol 3-phosphate</name>
        <dbReference type="ChEBI" id="CHEBI:57597"/>
    </ligand>
</feature>
<feature type="binding site" evidence="1">
    <location>
        <position position="256"/>
    </location>
    <ligand>
        <name>NADPH</name>
        <dbReference type="ChEBI" id="CHEBI:57783"/>
    </ligand>
</feature>
<feature type="binding site" evidence="1">
    <location>
        <position position="256"/>
    </location>
    <ligand>
        <name>sn-glycerol 3-phosphate</name>
        <dbReference type="ChEBI" id="CHEBI:57597"/>
    </ligand>
</feature>
<feature type="binding site" evidence="1">
    <location>
        <position position="257"/>
    </location>
    <ligand>
        <name>sn-glycerol 3-phosphate</name>
        <dbReference type="ChEBI" id="CHEBI:57597"/>
    </ligand>
</feature>
<feature type="binding site" evidence="1">
    <location>
        <position position="282"/>
    </location>
    <ligand>
        <name>NADPH</name>
        <dbReference type="ChEBI" id="CHEBI:57783"/>
    </ligand>
</feature>
<dbReference type="EC" id="1.1.1.94" evidence="1"/>
<dbReference type="EMBL" id="CP000890">
    <property type="protein sequence ID" value="ABX77892.1"/>
    <property type="molecule type" value="Genomic_DNA"/>
</dbReference>
<dbReference type="RefSeq" id="WP_012220691.1">
    <property type="nucleotide sequence ID" value="NC_010117.1"/>
</dbReference>
<dbReference type="SMR" id="A9N956"/>
<dbReference type="KEGG" id="cbs:COXBURSA331_A1701"/>
<dbReference type="HOGENOM" id="CLU_033449_0_2_6"/>
<dbReference type="UniPathway" id="UPA00940"/>
<dbReference type="GO" id="GO:0005829">
    <property type="term" value="C:cytosol"/>
    <property type="evidence" value="ECO:0007669"/>
    <property type="project" value="TreeGrafter"/>
</dbReference>
<dbReference type="GO" id="GO:0047952">
    <property type="term" value="F:glycerol-3-phosphate dehydrogenase [NAD(P)+] activity"/>
    <property type="evidence" value="ECO:0007669"/>
    <property type="project" value="UniProtKB-UniRule"/>
</dbReference>
<dbReference type="GO" id="GO:0051287">
    <property type="term" value="F:NAD binding"/>
    <property type="evidence" value="ECO:0007669"/>
    <property type="project" value="InterPro"/>
</dbReference>
<dbReference type="GO" id="GO:0005975">
    <property type="term" value="P:carbohydrate metabolic process"/>
    <property type="evidence" value="ECO:0007669"/>
    <property type="project" value="InterPro"/>
</dbReference>
<dbReference type="GO" id="GO:0046167">
    <property type="term" value="P:glycerol-3-phosphate biosynthetic process"/>
    <property type="evidence" value="ECO:0007669"/>
    <property type="project" value="UniProtKB-UniRule"/>
</dbReference>
<dbReference type="GO" id="GO:0046168">
    <property type="term" value="P:glycerol-3-phosphate catabolic process"/>
    <property type="evidence" value="ECO:0007669"/>
    <property type="project" value="InterPro"/>
</dbReference>
<dbReference type="GO" id="GO:0046474">
    <property type="term" value="P:glycerophospholipid biosynthetic process"/>
    <property type="evidence" value="ECO:0007669"/>
    <property type="project" value="TreeGrafter"/>
</dbReference>
<dbReference type="FunFam" id="1.10.1040.10:FF:000001">
    <property type="entry name" value="Glycerol-3-phosphate dehydrogenase [NAD(P)+]"/>
    <property type="match status" value="1"/>
</dbReference>
<dbReference type="FunFam" id="3.40.50.720:FF:000019">
    <property type="entry name" value="Glycerol-3-phosphate dehydrogenase [NAD(P)+]"/>
    <property type="match status" value="1"/>
</dbReference>
<dbReference type="Gene3D" id="1.10.1040.10">
    <property type="entry name" value="N-(1-d-carboxylethyl)-l-norvaline Dehydrogenase, domain 2"/>
    <property type="match status" value="1"/>
</dbReference>
<dbReference type="Gene3D" id="3.40.50.720">
    <property type="entry name" value="NAD(P)-binding Rossmann-like Domain"/>
    <property type="match status" value="1"/>
</dbReference>
<dbReference type="HAMAP" id="MF_00394">
    <property type="entry name" value="NAD_Glyc3P_dehydrog"/>
    <property type="match status" value="1"/>
</dbReference>
<dbReference type="InterPro" id="IPR008927">
    <property type="entry name" value="6-PGluconate_DH-like_C_sf"/>
</dbReference>
<dbReference type="InterPro" id="IPR013328">
    <property type="entry name" value="6PGD_dom2"/>
</dbReference>
<dbReference type="InterPro" id="IPR006168">
    <property type="entry name" value="G3P_DH_NAD-dep"/>
</dbReference>
<dbReference type="InterPro" id="IPR006109">
    <property type="entry name" value="G3P_DH_NAD-dep_C"/>
</dbReference>
<dbReference type="InterPro" id="IPR011128">
    <property type="entry name" value="G3P_DH_NAD-dep_N"/>
</dbReference>
<dbReference type="InterPro" id="IPR036291">
    <property type="entry name" value="NAD(P)-bd_dom_sf"/>
</dbReference>
<dbReference type="NCBIfam" id="NF000940">
    <property type="entry name" value="PRK00094.1-2"/>
    <property type="match status" value="1"/>
</dbReference>
<dbReference type="NCBIfam" id="NF000942">
    <property type="entry name" value="PRK00094.1-4"/>
    <property type="match status" value="1"/>
</dbReference>
<dbReference type="PANTHER" id="PTHR11728">
    <property type="entry name" value="GLYCEROL-3-PHOSPHATE DEHYDROGENASE"/>
    <property type="match status" value="1"/>
</dbReference>
<dbReference type="PANTHER" id="PTHR11728:SF1">
    <property type="entry name" value="GLYCEROL-3-PHOSPHATE DEHYDROGENASE [NAD(+)] 2, CHLOROPLASTIC"/>
    <property type="match status" value="1"/>
</dbReference>
<dbReference type="Pfam" id="PF07479">
    <property type="entry name" value="NAD_Gly3P_dh_C"/>
    <property type="match status" value="1"/>
</dbReference>
<dbReference type="Pfam" id="PF01210">
    <property type="entry name" value="NAD_Gly3P_dh_N"/>
    <property type="match status" value="1"/>
</dbReference>
<dbReference type="PIRSF" id="PIRSF000114">
    <property type="entry name" value="Glycerol-3-P_dh"/>
    <property type="match status" value="1"/>
</dbReference>
<dbReference type="PRINTS" id="PR00077">
    <property type="entry name" value="GPDHDRGNASE"/>
</dbReference>
<dbReference type="SUPFAM" id="SSF48179">
    <property type="entry name" value="6-phosphogluconate dehydrogenase C-terminal domain-like"/>
    <property type="match status" value="1"/>
</dbReference>
<dbReference type="SUPFAM" id="SSF51735">
    <property type="entry name" value="NAD(P)-binding Rossmann-fold domains"/>
    <property type="match status" value="1"/>
</dbReference>
<dbReference type="PROSITE" id="PS00957">
    <property type="entry name" value="NAD_G3PDH"/>
    <property type="match status" value="1"/>
</dbReference>
<evidence type="ECO:0000255" key="1">
    <source>
        <dbReference type="HAMAP-Rule" id="MF_00394"/>
    </source>
</evidence>
<keyword id="KW-0963">Cytoplasm</keyword>
<keyword id="KW-0444">Lipid biosynthesis</keyword>
<keyword id="KW-0443">Lipid metabolism</keyword>
<keyword id="KW-0520">NAD</keyword>
<keyword id="KW-0521">NADP</keyword>
<keyword id="KW-0547">Nucleotide-binding</keyword>
<keyword id="KW-0560">Oxidoreductase</keyword>
<keyword id="KW-0594">Phospholipid biosynthesis</keyword>
<keyword id="KW-1208">Phospholipid metabolism</keyword>
<gene>
    <name evidence="1" type="primary">gpsA</name>
    <name type="ordered locus">COXBURSA331_A1701</name>
</gene>
<organism>
    <name type="scientific">Coxiella burnetii (strain RSA 331 / Henzerling II)</name>
    <dbReference type="NCBI Taxonomy" id="360115"/>
    <lineage>
        <taxon>Bacteria</taxon>
        <taxon>Pseudomonadati</taxon>
        <taxon>Pseudomonadota</taxon>
        <taxon>Gammaproteobacteria</taxon>
        <taxon>Legionellales</taxon>
        <taxon>Coxiellaceae</taxon>
        <taxon>Coxiella</taxon>
    </lineage>
</organism>
<proteinExistence type="inferred from homology"/>
<protein>
    <recommendedName>
        <fullName evidence="1">Glycerol-3-phosphate dehydrogenase [NAD(P)+]</fullName>
        <ecNumber evidence="1">1.1.1.94</ecNumber>
    </recommendedName>
    <alternativeName>
        <fullName evidence="1">NAD(P)(+)-dependent glycerol-3-phosphate dehydrogenase</fullName>
    </alternativeName>
    <alternativeName>
        <fullName evidence="1">NAD(P)H-dependent dihydroxyacetone-phosphate reductase</fullName>
    </alternativeName>
</protein>
<accession>A9N956</accession>
<name>GPDA_COXBR</name>
<reference key="1">
    <citation type="submission" date="2007-11" db="EMBL/GenBank/DDBJ databases">
        <title>Genome sequencing of phylogenetically and phenotypically diverse Coxiella burnetii isolates.</title>
        <authorList>
            <person name="Seshadri R."/>
            <person name="Samuel J.E."/>
        </authorList>
    </citation>
    <scope>NUCLEOTIDE SEQUENCE [LARGE SCALE GENOMIC DNA]</scope>
    <source>
        <strain>RSA 331 / Henzerling II</strain>
    </source>
</reference>